<organism>
    <name type="scientific">Homo sapiens</name>
    <name type="common">Human</name>
    <dbReference type="NCBI Taxonomy" id="9606"/>
    <lineage>
        <taxon>Eukaryota</taxon>
        <taxon>Metazoa</taxon>
        <taxon>Chordata</taxon>
        <taxon>Craniata</taxon>
        <taxon>Vertebrata</taxon>
        <taxon>Euteleostomi</taxon>
        <taxon>Mammalia</taxon>
        <taxon>Eutheria</taxon>
        <taxon>Euarchontoglires</taxon>
        <taxon>Primates</taxon>
        <taxon>Haplorrhini</taxon>
        <taxon>Catarrhini</taxon>
        <taxon>Hominidae</taxon>
        <taxon>Homo</taxon>
    </lineage>
</organism>
<evidence type="ECO:0000256" key="1">
    <source>
        <dbReference type="SAM" id="MobiDB-lite"/>
    </source>
</evidence>
<reference key="1">
    <citation type="journal article" date="2006" name="Nature">
        <title>The finished DNA sequence of human chromosome 12.</title>
        <authorList>
            <person name="Scherer S.E."/>
            <person name="Muzny D.M."/>
            <person name="Buhay C.J."/>
            <person name="Chen R."/>
            <person name="Cree A."/>
            <person name="Ding Y."/>
            <person name="Dugan-Rocha S."/>
            <person name="Gill R."/>
            <person name="Gunaratne P."/>
            <person name="Harris R.A."/>
            <person name="Hawes A.C."/>
            <person name="Hernandez J."/>
            <person name="Hodgson A.V."/>
            <person name="Hume J."/>
            <person name="Jackson A."/>
            <person name="Khan Z.M."/>
            <person name="Kovar-Smith C."/>
            <person name="Lewis L.R."/>
            <person name="Lozado R.J."/>
            <person name="Metzker M.L."/>
            <person name="Milosavljevic A."/>
            <person name="Miner G.R."/>
            <person name="Montgomery K.T."/>
            <person name="Morgan M.B."/>
            <person name="Nazareth L.V."/>
            <person name="Scott G."/>
            <person name="Sodergren E."/>
            <person name="Song X.-Z."/>
            <person name="Steffen D."/>
            <person name="Lovering R.C."/>
            <person name="Wheeler D.A."/>
            <person name="Worley K.C."/>
            <person name="Yuan Y."/>
            <person name="Zhang Z."/>
            <person name="Adams C.Q."/>
            <person name="Ansari-Lari M.A."/>
            <person name="Ayele M."/>
            <person name="Brown M.J."/>
            <person name="Chen G."/>
            <person name="Chen Z."/>
            <person name="Clerc-Blankenburg K.P."/>
            <person name="Davis C."/>
            <person name="Delgado O."/>
            <person name="Dinh H.H."/>
            <person name="Draper H."/>
            <person name="Gonzalez-Garay M.L."/>
            <person name="Havlak P."/>
            <person name="Jackson L.R."/>
            <person name="Jacob L.S."/>
            <person name="Kelly S.H."/>
            <person name="Li L."/>
            <person name="Li Z."/>
            <person name="Liu J."/>
            <person name="Liu W."/>
            <person name="Lu J."/>
            <person name="Maheshwari M."/>
            <person name="Nguyen B.-V."/>
            <person name="Okwuonu G.O."/>
            <person name="Pasternak S."/>
            <person name="Perez L.M."/>
            <person name="Plopper F.J.H."/>
            <person name="Santibanez J."/>
            <person name="Shen H."/>
            <person name="Tabor P.E."/>
            <person name="Verduzco D."/>
            <person name="Waldron L."/>
            <person name="Wang Q."/>
            <person name="Williams G.A."/>
            <person name="Zhang J."/>
            <person name="Zhou J."/>
            <person name="Allen C.C."/>
            <person name="Amin A.G."/>
            <person name="Anyalebechi V."/>
            <person name="Bailey M."/>
            <person name="Barbaria J.A."/>
            <person name="Bimage K.E."/>
            <person name="Bryant N.P."/>
            <person name="Burch P.E."/>
            <person name="Burkett C.E."/>
            <person name="Burrell K.L."/>
            <person name="Calderon E."/>
            <person name="Cardenas V."/>
            <person name="Carter K."/>
            <person name="Casias K."/>
            <person name="Cavazos I."/>
            <person name="Cavazos S.R."/>
            <person name="Ceasar H."/>
            <person name="Chacko J."/>
            <person name="Chan S.N."/>
            <person name="Chavez D."/>
            <person name="Christopoulos C."/>
            <person name="Chu J."/>
            <person name="Cockrell R."/>
            <person name="Cox C.D."/>
            <person name="Dang M."/>
            <person name="Dathorne S.R."/>
            <person name="David R."/>
            <person name="Davis C.M."/>
            <person name="Davy-Carroll L."/>
            <person name="Deshazo D.R."/>
            <person name="Donlin J.E."/>
            <person name="D'Souza L."/>
            <person name="Eaves K.A."/>
            <person name="Egan A."/>
            <person name="Emery-Cohen A.J."/>
            <person name="Escotto M."/>
            <person name="Flagg N."/>
            <person name="Forbes L.D."/>
            <person name="Gabisi A.M."/>
            <person name="Garza M."/>
            <person name="Hamilton C."/>
            <person name="Henderson N."/>
            <person name="Hernandez O."/>
            <person name="Hines S."/>
            <person name="Hogues M.E."/>
            <person name="Huang M."/>
            <person name="Idlebird D.G."/>
            <person name="Johnson R."/>
            <person name="Jolivet A."/>
            <person name="Jones S."/>
            <person name="Kagan R."/>
            <person name="King L.M."/>
            <person name="Leal B."/>
            <person name="Lebow H."/>
            <person name="Lee S."/>
            <person name="LeVan J.M."/>
            <person name="Lewis L.C."/>
            <person name="London P."/>
            <person name="Lorensuhewa L.M."/>
            <person name="Loulseged H."/>
            <person name="Lovett D.A."/>
            <person name="Lucier A."/>
            <person name="Lucier R.L."/>
            <person name="Ma J."/>
            <person name="Madu R.C."/>
            <person name="Mapua P."/>
            <person name="Martindale A.D."/>
            <person name="Martinez E."/>
            <person name="Massey E."/>
            <person name="Mawhiney S."/>
            <person name="Meador M.G."/>
            <person name="Mendez S."/>
            <person name="Mercado C."/>
            <person name="Mercado I.C."/>
            <person name="Merritt C.E."/>
            <person name="Miner Z.L."/>
            <person name="Minja E."/>
            <person name="Mitchell T."/>
            <person name="Mohabbat F."/>
            <person name="Mohabbat K."/>
            <person name="Montgomery B."/>
            <person name="Moore N."/>
            <person name="Morris S."/>
            <person name="Munidasa M."/>
            <person name="Ngo R.N."/>
            <person name="Nguyen N.B."/>
            <person name="Nickerson E."/>
            <person name="Nwaokelemeh O.O."/>
            <person name="Nwokenkwo S."/>
            <person name="Obregon M."/>
            <person name="Oguh M."/>
            <person name="Oragunye N."/>
            <person name="Oviedo R.J."/>
            <person name="Parish B.J."/>
            <person name="Parker D.N."/>
            <person name="Parrish J."/>
            <person name="Parks K.L."/>
            <person name="Paul H.A."/>
            <person name="Payton B.A."/>
            <person name="Perez A."/>
            <person name="Perrin W."/>
            <person name="Pickens A."/>
            <person name="Primus E.L."/>
            <person name="Pu L.-L."/>
            <person name="Puazo M."/>
            <person name="Quiles M.M."/>
            <person name="Quiroz J.B."/>
            <person name="Rabata D."/>
            <person name="Reeves K."/>
            <person name="Ruiz S.J."/>
            <person name="Shao H."/>
            <person name="Sisson I."/>
            <person name="Sonaike T."/>
            <person name="Sorelle R.P."/>
            <person name="Sutton A.E."/>
            <person name="Svatek A.F."/>
            <person name="Svetz L.A."/>
            <person name="Tamerisa K.S."/>
            <person name="Taylor T.R."/>
            <person name="Teague B."/>
            <person name="Thomas N."/>
            <person name="Thorn R.D."/>
            <person name="Trejos Z.Y."/>
            <person name="Trevino B.K."/>
            <person name="Ukegbu O.N."/>
            <person name="Urban J.B."/>
            <person name="Vasquez L.I."/>
            <person name="Vera V.A."/>
            <person name="Villasana D.M."/>
            <person name="Wang L."/>
            <person name="Ward-Moore S."/>
            <person name="Warren J.T."/>
            <person name="Wei X."/>
            <person name="White F."/>
            <person name="Williamson A.L."/>
            <person name="Wleczyk R."/>
            <person name="Wooden H.S."/>
            <person name="Wooden S.H."/>
            <person name="Yen J."/>
            <person name="Yoon L."/>
            <person name="Yoon V."/>
            <person name="Zorrilla S.E."/>
            <person name="Nelson D."/>
            <person name="Kucherlapati R."/>
            <person name="Weinstock G."/>
            <person name="Gibbs R.A."/>
        </authorList>
    </citation>
    <scope>NUCLEOTIDE SEQUENCE [LARGE SCALE GENOMIC DNA]</scope>
</reference>
<proteinExistence type="evidence at protein level"/>
<keyword id="KW-1267">Proteomics identification</keyword>
<keyword id="KW-1185">Reference proteome</keyword>
<dbReference type="EMBL" id="AC092747">
    <property type="status" value="NOT_ANNOTATED_CDS"/>
    <property type="molecule type" value="Genomic_DNA"/>
</dbReference>
<dbReference type="CCDS" id="CCDS44851.1"/>
<dbReference type="RefSeq" id="NP_001073875.1">
    <property type="nucleotide sequence ID" value="NM_001080406.2"/>
</dbReference>
<dbReference type="RefSeq" id="NP_001371912.1">
    <property type="nucleotide sequence ID" value="NM_001384983.1"/>
</dbReference>
<dbReference type="RefSeq" id="XP_011519149.1">
    <property type="nucleotide sequence ID" value="XM_011520847.2"/>
</dbReference>
<dbReference type="BioGRID" id="609275">
    <property type="interactions" value="1"/>
</dbReference>
<dbReference type="STRING" id="9606.ENSP00000413728"/>
<dbReference type="iPTMnet" id="A8MTZ7"/>
<dbReference type="PhosphoSitePlus" id="A8MTZ7"/>
<dbReference type="BioMuta" id="C12orf71"/>
<dbReference type="jPOST" id="A8MTZ7"/>
<dbReference type="MassIVE" id="A8MTZ7"/>
<dbReference type="PaxDb" id="9606-ENSP00000413728"/>
<dbReference type="PeptideAtlas" id="A8MTZ7"/>
<dbReference type="ProteomicsDB" id="2067"/>
<dbReference type="Antibodypedia" id="49080">
    <property type="antibodies" value="6 antibodies from 4 providers"/>
</dbReference>
<dbReference type="DNASU" id="728858"/>
<dbReference type="Ensembl" id="ENST00000429849.3">
    <property type="protein sequence ID" value="ENSP00000413728.2"/>
    <property type="gene ID" value="ENSG00000214700.6"/>
</dbReference>
<dbReference type="GeneID" id="728858"/>
<dbReference type="KEGG" id="hsa:728858"/>
<dbReference type="MANE-Select" id="ENST00000429849.3">
    <property type="protein sequence ID" value="ENSP00000413728.2"/>
    <property type="RefSeq nucleotide sequence ID" value="NM_001080406.2"/>
    <property type="RefSeq protein sequence ID" value="NP_001073875.1"/>
</dbReference>
<dbReference type="UCSC" id="uc001rhq.4">
    <property type="organism name" value="human"/>
</dbReference>
<dbReference type="AGR" id="HGNC:34452"/>
<dbReference type="CTD" id="728858"/>
<dbReference type="DisGeNET" id="728858"/>
<dbReference type="GeneCards" id="C12orf71"/>
<dbReference type="HGNC" id="HGNC:34452">
    <property type="gene designation" value="C12orf71"/>
</dbReference>
<dbReference type="HPA" id="ENSG00000214700">
    <property type="expression patterns" value="Tissue enhanced (bone marrow, testis)"/>
</dbReference>
<dbReference type="neXtProt" id="NX_A8MTZ7"/>
<dbReference type="VEuPathDB" id="HostDB:ENSG00000214700"/>
<dbReference type="eggNOG" id="ENOG502RTYV">
    <property type="taxonomic scope" value="Eukaryota"/>
</dbReference>
<dbReference type="GeneTree" id="ENSGT00390000018322"/>
<dbReference type="HOGENOM" id="CLU_081160_0_0_1"/>
<dbReference type="InParanoid" id="A8MTZ7"/>
<dbReference type="OMA" id="PPIQGTW"/>
<dbReference type="OrthoDB" id="9450944at2759"/>
<dbReference type="PAN-GO" id="A8MTZ7">
    <property type="GO annotations" value="0 GO annotations based on evolutionary models"/>
</dbReference>
<dbReference type="PhylomeDB" id="A8MTZ7"/>
<dbReference type="TreeFam" id="TF338465"/>
<dbReference type="SignaLink" id="A8MTZ7"/>
<dbReference type="BioGRID-ORCS" id="728858">
    <property type="hits" value="18 hits in 1103 CRISPR screens"/>
</dbReference>
<dbReference type="GenomeRNAi" id="728858"/>
<dbReference type="Pharos" id="A8MTZ7">
    <property type="development level" value="Tdark"/>
</dbReference>
<dbReference type="PRO" id="PR:A8MTZ7"/>
<dbReference type="Proteomes" id="UP000005640">
    <property type="component" value="Chromosome 12"/>
</dbReference>
<dbReference type="RNAct" id="A8MTZ7">
    <property type="molecule type" value="protein"/>
</dbReference>
<dbReference type="Bgee" id="ENSG00000214700">
    <property type="expression patterns" value="Expressed in male germ line stem cell (sensu Vertebrata) in testis and 89 other cell types or tissues"/>
</dbReference>
<dbReference type="InterPro" id="IPR027908">
    <property type="entry name" value="DUF4640"/>
</dbReference>
<dbReference type="PANTHER" id="PTHR36462">
    <property type="entry name" value="CHROMOSOME 12 OPEN READING FRAME 71"/>
    <property type="match status" value="1"/>
</dbReference>
<dbReference type="PANTHER" id="PTHR36462:SF1">
    <property type="entry name" value="CHROMOSOME 12 OPEN READING FRAME 71"/>
    <property type="match status" value="1"/>
</dbReference>
<dbReference type="Pfam" id="PF15480">
    <property type="entry name" value="DUF4640"/>
    <property type="match status" value="2"/>
</dbReference>
<protein>
    <recommendedName>
        <fullName>Uncharacterized protein C12orf71</fullName>
    </recommendedName>
</protein>
<gene>
    <name type="primary">C12orf71</name>
</gene>
<feature type="chain" id="PRO_0000343577" description="Uncharacterized protein C12orf71">
    <location>
        <begin position="1"/>
        <end position="269"/>
    </location>
</feature>
<feature type="region of interest" description="Disordered" evidence="1">
    <location>
        <begin position="1"/>
        <end position="21"/>
    </location>
</feature>
<feature type="sequence variant" id="VAR_056837" description="In dbSNP:rs708167.">
    <original>I</original>
    <variation>V</variation>
    <location>
        <position position="140"/>
    </location>
</feature>
<accession>A8MTZ7</accession>
<sequence length="269" mass="30355">MAYSSSNSDIEDDSSKSNSNLSLSVGYFPCEDTPCEDTTSWEDAPSKGPSIHFLPPVQGAWGTERIGRRMKRQDQIQDEPEQFCKLSIFLAWDVDIGSDNTDSRANRLLNGDNLWIDKLPKERTKLSVGKLNNLVQEFQIFLENLKDDDAVFPETAQQDFQLSSGSPPEMVQMISQATASQRTSAPEISSILSEQPEKDDTPSHTQAQCCLNFGWAFSWLRQRILPSLLRRDHPVNATKSPHRSAPTKRLFHRGKRIQPQETLELGHPI</sequence>
<name>CL071_HUMAN</name>